<dbReference type="EC" id="3.4.19.12" evidence="1"/>
<dbReference type="EMBL" id="BC123321">
    <property type="protein sequence ID" value="AAI23322.1"/>
    <property type="molecule type" value="mRNA"/>
</dbReference>
<dbReference type="RefSeq" id="NP_001090389.1">
    <property type="nucleotide sequence ID" value="NM_001096920.1"/>
</dbReference>
<dbReference type="SMR" id="Q0IH43"/>
<dbReference type="MEROPS" id="C85.007"/>
<dbReference type="DNASU" id="779300"/>
<dbReference type="GeneID" id="779300"/>
<dbReference type="KEGG" id="xla:779300"/>
<dbReference type="AGR" id="Xenbase:XB-GENE-998963"/>
<dbReference type="CTD" id="779300"/>
<dbReference type="Xenbase" id="XB-GENE-998963">
    <property type="gene designation" value="yod1.L"/>
</dbReference>
<dbReference type="OMA" id="TRCILVY"/>
<dbReference type="OrthoDB" id="65596at2759"/>
<dbReference type="Proteomes" id="UP000186698">
    <property type="component" value="Chromosome 2L"/>
</dbReference>
<dbReference type="Bgee" id="779300">
    <property type="expression patterns" value="Expressed in blastula and 19 other cell types or tissues"/>
</dbReference>
<dbReference type="GO" id="GO:0005737">
    <property type="term" value="C:cytoplasm"/>
    <property type="evidence" value="ECO:0000250"/>
    <property type="project" value="UniProtKB"/>
</dbReference>
<dbReference type="GO" id="GO:0005829">
    <property type="term" value="C:cytosol"/>
    <property type="evidence" value="ECO:0007669"/>
    <property type="project" value="TreeGrafter"/>
</dbReference>
<dbReference type="GO" id="GO:0005634">
    <property type="term" value="C:nucleus"/>
    <property type="evidence" value="ECO:0007669"/>
    <property type="project" value="TreeGrafter"/>
</dbReference>
<dbReference type="GO" id="GO:0004843">
    <property type="term" value="F:cysteine-type deubiquitinase activity"/>
    <property type="evidence" value="ECO:0000250"/>
    <property type="project" value="UniProtKB"/>
</dbReference>
<dbReference type="GO" id="GO:0008270">
    <property type="term" value="F:zinc ion binding"/>
    <property type="evidence" value="ECO:0007669"/>
    <property type="project" value="UniProtKB-KW"/>
</dbReference>
<dbReference type="GO" id="GO:0030968">
    <property type="term" value="P:endoplasmic reticulum unfolded protein response"/>
    <property type="evidence" value="ECO:0000250"/>
    <property type="project" value="UniProtKB"/>
</dbReference>
<dbReference type="GO" id="GO:0036503">
    <property type="term" value="P:ERAD pathway"/>
    <property type="evidence" value="ECO:0000250"/>
    <property type="project" value="UniProtKB"/>
</dbReference>
<dbReference type="GO" id="GO:0016236">
    <property type="term" value="P:macroautophagy"/>
    <property type="evidence" value="ECO:0000250"/>
    <property type="project" value="UniProtKB"/>
</dbReference>
<dbReference type="GO" id="GO:0035871">
    <property type="term" value="P:protein K11-linked deubiquitination"/>
    <property type="evidence" value="ECO:0000250"/>
    <property type="project" value="UniProtKB"/>
</dbReference>
<dbReference type="GO" id="GO:1990167">
    <property type="term" value="P:protein K27-linked deubiquitination"/>
    <property type="evidence" value="ECO:0000250"/>
    <property type="project" value="UniProtKB"/>
</dbReference>
<dbReference type="GO" id="GO:0035523">
    <property type="term" value="P:protein K29-linked deubiquitination"/>
    <property type="evidence" value="ECO:0000250"/>
    <property type="project" value="UniProtKB"/>
</dbReference>
<dbReference type="GO" id="GO:1990168">
    <property type="term" value="P:protein K33-linked deubiquitination"/>
    <property type="evidence" value="ECO:0000250"/>
    <property type="project" value="UniProtKB"/>
</dbReference>
<dbReference type="GO" id="GO:0071108">
    <property type="term" value="P:protein K48-linked deubiquitination"/>
    <property type="evidence" value="ECO:0000250"/>
    <property type="project" value="UniProtKB"/>
</dbReference>
<dbReference type="GO" id="GO:0070536">
    <property type="term" value="P:protein K63-linked deubiquitination"/>
    <property type="evidence" value="ECO:0000250"/>
    <property type="project" value="UniProtKB"/>
</dbReference>
<dbReference type="CDD" id="cd22745">
    <property type="entry name" value="OTU_OTU1"/>
    <property type="match status" value="1"/>
</dbReference>
<dbReference type="CDD" id="cd17059">
    <property type="entry name" value="Ubl_OTU1"/>
    <property type="match status" value="1"/>
</dbReference>
<dbReference type="FunFam" id="3.10.20.90:FF:000096">
    <property type="entry name" value="Ubiquitin thioesterase OTU1"/>
    <property type="match status" value="1"/>
</dbReference>
<dbReference type="FunFam" id="3.90.70.80:FF:000006">
    <property type="entry name" value="Ubiquitin thioesterase OTU1"/>
    <property type="match status" value="1"/>
</dbReference>
<dbReference type="Gene3D" id="3.90.70.80">
    <property type="match status" value="1"/>
</dbReference>
<dbReference type="Gene3D" id="3.10.20.90">
    <property type="entry name" value="Phosphatidylinositol 3-kinase Catalytic Subunit, Chain A, domain 1"/>
    <property type="match status" value="1"/>
</dbReference>
<dbReference type="InterPro" id="IPR048857">
    <property type="entry name" value="OTU1_Ubl"/>
</dbReference>
<dbReference type="InterPro" id="IPR003323">
    <property type="entry name" value="OTU_dom"/>
</dbReference>
<dbReference type="InterPro" id="IPR038765">
    <property type="entry name" value="Papain-like_cys_pep_sf"/>
</dbReference>
<dbReference type="InterPro" id="IPR029071">
    <property type="entry name" value="Ubiquitin-like_domsf"/>
</dbReference>
<dbReference type="InterPro" id="IPR013087">
    <property type="entry name" value="Znf_C2H2_type"/>
</dbReference>
<dbReference type="PANTHER" id="PTHR13312">
    <property type="entry name" value="HIV-INDUCED PROTEIN-7-LIKE PROTEASE"/>
    <property type="match status" value="1"/>
</dbReference>
<dbReference type="PANTHER" id="PTHR13312:SF0">
    <property type="entry name" value="UBIQUITIN THIOESTERASE OTU1"/>
    <property type="match status" value="1"/>
</dbReference>
<dbReference type="Pfam" id="PF02338">
    <property type="entry name" value="OTU"/>
    <property type="match status" value="1"/>
</dbReference>
<dbReference type="Pfam" id="PF21403">
    <property type="entry name" value="OTU1_UBXL"/>
    <property type="match status" value="1"/>
</dbReference>
<dbReference type="Pfam" id="PF24560">
    <property type="entry name" value="zf-C2H2_OTU1_C"/>
    <property type="match status" value="1"/>
</dbReference>
<dbReference type="SUPFAM" id="SSF54001">
    <property type="entry name" value="Cysteine proteinases"/>
    <property type="match status" value="1"/>
</dbReference>
<dbReference type="SUPFAM" id="SSF54236">
    <property type="entry name" value="Ubiquitin-like"/>
    <property type="match status" value="1"/>
</dbReference>
<dbReference type="PROSITE" id="PS50802">
    <property type="entry name" value="OTU"/>
    <property type="match status" value="1"/>
</dbReference>
<dbReference type="PROSITE" id="PS00028">
    <property type="entry name" value="ZINC_FINGER_C2H2_1"/>
    <property type="match status" value="1"/>
</dbReference>
<evidence type="ECO:0000250" key="1">
    <source>
        <dbReference type="UniProtKB" id="Q5VVQ6"/>
    </source>
</evidence>
<evidence type="ECO:0000250" key="2">
    <source>
        <dbReference type="UniProtKB" id="Q96FW1"/>
    </source>
</evidence>
<evidence type="ECO:0000255" key="3">
    <source>
        <dbReference type="PROSITE-ProRule" id="PRU00139"/>
    </source>
</evidence>
<organism>
    <name type="scientific">Xenopus laevis</name>
    <name type="common">African clawed frog</name>
    <dbReference type="NCBI Taxonomy" id="8355"/>
    <lineage>
        <taxon>Eukaryota</taxon>
        <taxon>Metazoa</taxon>
        <taxon>Chordata</taxon>
        <taxon>Craniata</taxon>
        <taxon>Vertebrata</taxon>
        <taxon>Euteleostomi</taxon>
        <taxon>Amphibia</taxon>
        <taxon>Batrachia</taxon>
        <taxon>Anura</taxon>
        <taxon>Pipoidea</taxon>
        <taxon>Pipidae</taxon>
        <taxon>Xenopodinae</taxon>
        <taxon>Xenopus</taxon>
        <taxon>Xenopus</taxon>
    </lineage>
</organism>
<comment type="function">
    <text evidence="1">Hydrolase that can remove conjugated ubiquitin from proteins and participates in endoplasmic reticulum-associated degradation (ERAD) for misfolded lumenal proteins. May act by triming the ubiquitin chain on the associated substrate to facilitate their threading through the VCP/p97 pore. Ubiquitin moieties on substrates may present a steric impediment to the threading process when the substrate is transferred to the VCP pore and threaded through VCP's axial channel. Mediates deubiquitination of 'Lys-27'-, 'Lys-29'- and 'Lys-33'-linked polyubiquitin chains. Also able to hydrolyze 'Lys-11'-linked ubiquitin chains. Cleaves both polyubiquitin and di-ubiquitin.</text>
</comment>
<comment type="catalytic activity">
    <reaction evidence="1">
        <text>Thiol-dependent hydrolysis of ester, thioester, amide, peptide and isopeptide bonds formed by the C-terminal Gly of ubiquitin (a 76-residue protein attached to proteins as an intracellular targeting signal).</text>
        <dbReference type="EC" id="3.4.19.12"/>
    </reaction>
</comment>
<comment type="subcellular location">
    <subcellularLocation>
        <location evidence="1">Cytoplasm</location>
    </subcellularLocation>
</comment>
<gene>
    <name type="primary">yod1</name>
</gene>
<keyword id="KW-0963">Cytoplasm</keyword>
<keyword id="KW-0378">Hydrolase</keyword>
<keyword id="KW-0479">Metal-binding</keyword>
<keyword id="KW-0645">Protease</keyword>
<keyword id="KW-1185">Reference proteome</keyword>
<keyword id="KW-0788">Thiol protease</keyword>
<keyword id="KW-0833">Ubl conjugation pathway</keyword>
<keyword id="KW-0834">Unfolded protein response</keyword>
<keyword id="KW-0862">Zinc</keyword>
<keyword id="KW-0863">Zinc-finger</keyword>
<sequence>MLRLRCKTREGTQLLQGLTDRSSIRELQERIAGVTGISGPLQRVMVGFPPLSLDLSDEEATLKNMSIKSGDTLIVEEDKSKLRSATPPVSKTDIGNWNAPAQPTIVRRVVPADNSCLFTSIYYVVEGGVYDPACALEMRSLIAEIVASDQSAYCDAVLGKSNEEYCSWIRREDTWGGAIEVSILSKFYQCEICVVDTQTVRIDRFGEDSGYTKRVLLIYDGIHYDPLQRQFPDPDMPPMTVFSTTDDEALVQAMELADDARKKRQFTDVNQFALRCMACQKGLTGQSAARDHAKETGHTNFGEV</sequence>
<accession>Q0IH43</accession>
<reference key="1">
    <citation type="submission" date="2006-09" db="EMBL/GenBank/DDBJ databases">
        <authorList>
            <consortium name="NIH - Xenopus Gene Collection (XGC) project"/>
        </authorList>
    </citation>
    <scope>NUCLEOTIDE SEQUENCE [LARGE SCALE MRNA]</scope>
    <source>
        <tissue>Ovary</tissue>
    </source>
</reference>
<name>OTU1_XENLA</name>
<feature type="chain" id="PRO_0000282361" description="Ubiquitin thioesterase OTU1">
    <location>
        <begin position="1"/>
        <end position="304"/>
    </location>
</feature>
<feature type="domain" description="OTU" evidence="3">
    <location>
        <begin position="105"/>
        <end position="230"/>
    </location>
</feature>
<feature type="zinc finger region" description="C2H2-type">
    <location>
        <begin position="274"/>
        <end position="298"/>
    </location>
</feature>
<feature type="region of interest" description="UBX-like">
    <location>
        <begin position="5"/>
        <end position="83"/>
    </location>
</feature>
<feature type="region of interest" description="Cys-loop" evidence="1">
    <location>
        <begin position="110"/>
        <end position="116"/>
    </location>
</feature>
<feature type="region of interest" description="Variable-loop" evidence="1">
    <location>
        <begin position="169"/>
        <end position="179"/>
    </location>
</feature>
<feature type="region of interest" description="His-loop" evidence="1">
    <location>
        <begin position="219"/>
        <end position="223"/>
    </location>
</feature>
<feature type="region of interest" description="S2 site" evidence="1">
    <location>
        <begin position="247"/>
        <end position="252"/>
    </location>
</feature>
<feature type="active site" evidence="2">
    <location>
        <position position="113"/>
    </location>
</feature>
<feature type="active site" description="Nucleophile" evidence="1">
    <location>
        <position position="116"/>
    </location>
</feature>
<feature type="active site" evidence="1">
    <location>
        <position position="223"/>
    </location>
</feature>
<feature type="active site" evidence="2">
    <location>
        <position position="298"/>
    </location>
</feature>
<feature type="binding site" evidence="1">
    <location>
        <position position="222"/>
    </location>
    <ligand>
        <name>substrate</name>
    </ligand>
</feature>
<proteinExistence type="evidence at transcript level"/>
<protein>
    <recommendedName>
        <fullName>Ubiquitin thioesterase OTU1</fullName>
        <ecNumber evidence="1">3.4.19.12</ecNumber>
    </recommendedName>
</protein>